<feature type="chain" id="PRO_0000166194" description="Uncharacterized 10.3 kDa protein in vnfA 5'region">
    <location>
        <begin position="1"/>
        <end position="96"/>
    </location>
</feature>
<organism>
    <name type="scientific">Azotobacter vinelandii</name>
    <dbReference type="NCBI Taxonomy" id="354"/>
    <lineage>
        <taxon>Bacteria</taxon>
        <taxon>Pseudomonadati</taxon>
        <taxon>Pseudomonadota</taxon>
        <taxon>Gammaproteobacteria</taxon>
        <taxon>Pseudomonadales</taxon>
        <taxon>Pseudomonadaceae</taxon>
        <taxon>Azotobacter</taxon>
    </lineage>
</organism>
<name>YVN2_AZOVI</name>
<accession>P40432</accession>
<comment type="similarity">
    <text evidence="1">Belongs to the NifU family.</text>
</comment>
<reference key="1">
    <citation type="journal article" date="1989" name="J. Bacteriol.">
        <title>Two nifA-like genes required for expression of alternative nitrogenases by Azotobacter vinelandii.</title>
        <authorList>
            <person name="Joerger R.D."/>
            <person name="Jacobson M.R."/>
            <person name="Bishop P.E."/>
        </authorList>
    </citation>
    <scope>NUCLEOTIDE SEQUENCE [GENOMIC DNA]</scope>
</reference>
<dbReference type="EMBL" id="M26752">
    <property type="protein sequence ID" value="AAA82515.1"/>
    <property type="molecule type" value="Genomic_DNA"/>
</dbReference>
<dbReference type="PIR" id="C44514">
    <property type="entry name" value="C44514"/>
</dbReference>
<dbReference type="RefSeq" id="WP_012698967.1">
    <property type="nucleotide sequence ID" value="NZ_FPKM01000002.1"/>
</dbReference>
<dbReference type="SMR" id="P40432"/>
<dbReference type="GeneID" id="88183733"/>
<dbReference type="OMA" id="GACIFCK"/>
<dbReference type="GO" id="GO:0005506">
    <property type="term" value="F:iron ion binding"/>
    <property type="evidence" value="ECO:0007669"/>
    <property type="project" value="InterPro"/>
</dbReference>
<dbReference type="GO" id="GO:0051536">
    <property type="term" value="F:iron-sulfur cluster binding"/>
    <property type="evidence" value="ECO:0007669"/>
    <property type="project" value="InterPro"/>
</dbReference>
<dbReference type="GO" id="GO:0016226">
    <property type="term" value="P:iron-sulfur cluster assembly"/>
    <property type="evidence" value="ECO:0007669"/>
    <property type="project" value="InterPro"/>
</dbReference>
<dbReference type="Gene3D" id="3.30.300.130">
    <property type="entry name" value="Fe-S cluster assembly (FSCA)"/>
    <property type="match status" value="1"/>
</dbReference>
<dbReference type="InterPro" id="IPR034904">
    <property type="entry name" value="FSCA_dom_sf"/>
</dbReference>
<dbReference type="InterPro" id="IPR001075">
    <property type="entry name" value="NIF_FeS_clus_asmbl_NifU_C"/>
</dbReference>
<dbReference type="PANTHER" id="PTHR11178">
    <property type="entry name" value="IRON-SULFUR CLUSTER SCAFFOLD PROTEIN NFU-RELATED"/>
    <property type="match status" value="1"/>
</dbReference>
<dbReference type="Pfam" id="PF01106">
    <property type="entry name" value="NifU"/>
    <property type="match status" value="1"/>
</dbReference>
<dbReference type="SUPFAM" id="SSF117916">
    <property type="entry name" value="Fe-S cluster assembly (FSCA) domain-like"/>
    <property type="match status" value="1"/>
</dbReference>
<sequence>MSNPPLDTEENATTLAITPIPAESLPLVRETVERLRPGVQRDGGDLELVAVQDNIVRLRLKGACVGCAMSAQTLGGVRRELVKVLDNPSVRVLPAP</sequence>
<evidence type="ECO:0000305" key="1"/>
<proteinExistence type="inferred from homology"/>
<protein>
    <recommendedName>
        <fullName>Uncharacterized 10.3 kDa protein in vnfA 5'region</fullName>
    </recommendedName>
</protein>